<comment type="function">
    <text evidence="1">One of two assembly initiator proteins for the 30S subunit, it binds directly to 16S rRNA where it nucleates assembly of the body of the 30S subunit.</text>
</comment>
<comment type="function">
    <text evidence="1">With S5 and S12 plays an important role in translational accuracy; many suppressors of streptomycin-dependent mutants of protein S12 are found in this protein, some but not all of which decrease translational accuracy (ram, ribosomal ambiguity mutations).</text>
</comment>
<comment type="function">
    <text evidence="1">Protein S4 is also a translational repressor protein, it controls the translation of the alpha-operon (which codes for S13, S11, S4, RNA polymerase alpha subunit, and L17) by binding to its mRNA.</text>
</comment>
<comment type="function">
    <text evidence="1">Also functions as a rho-dependent antiterminator of rRNA transcription, increasing the synthesis of rRNA under conditions of excess protein, allowing a more rapid return to homeostasis. Binds directly to RNA polymerase (By similarity).</text>
</comment>
<comment type="subunit">
    <text evidence="1">Part of the 30S ribosomal subunit. Contacts protein S5. Some nascent polypeptide chains are able to cross-link to this protein in situ (By similarity).</text>
</comment>
<comment type="similarity">
    <text evidence="2">Belongs to the universal ribosomal protein uS4 family.</text>
</comment>
<gene>
    <name type="primary">rpsD</name>
    <name type="synonym">ramA</name>
    <name type="ordered locus">c4057</name>
</gene>
<reference key="1">
    <citation type="journal article" date="2002" name="Proc. Natl. Acad. Sci. U.S.A.">
        <title>Extensive mosaic structure revealed by the complete genome sequence of uropathogenic Escherichia coli.</title>
        <authorList>
            <person name="Welch R.A."/>
            <person name="Burland V."/>
            <person name="Plunkett G. III"/>
            <person name="Redford P."/>
            <person name="Roesch P."/>
            <person name="Rasko D."/>
            <person name="Buckles E.L."/>
            <person name="Liou S.-R."/>
            <person name="Boutin A."/>
            <person name="Hackett J."/>
            <person name="Stroud D."/>
            <person name="Mayhew G.F."/>
            <person name="Rose D.J."/>
            <person name="Zhou S."/>
            <person name="Schwartz D.C."/>
            <person name="Perna N.T."/>
            <person name="Mobley H.L.T."/>
            <person name="Donnenberg M.S."/>
            <person name="Blattner F.R."/>
        </authorList>
    </citation>
    <scope>NUCLEOTIDE SEQUENCE [LARGE SCALE GENOMIC DNA]</scope>
    <source>
        <strain>CFT073 / ATCC 700928 / UPEC</strain>
    </source>
</reference>
<organism>
    <name type="scientific">Escherichia coli O6:H1 (strain CFT073 / ATCC 700928 / UPEC)</name>
    <dbReference type="NCBI Taxonomy" id="199310"/>
    <lineage>
        <taxon>Bacteria</taxon>
        <taxon>Pseudomonadati</taxon>
        <taxon>Pseudomonadota</taxon>
        <taxon>Gammaproteobacteria</taxon>
        <taxon>Enterobacterales</taxon>
        <taxon>Enterobacteriaceae</taxon>
        <taxon>Escherichia</taxon>
    </lineage>
</organism>
<name>RS4_ECOL6</name>
<feature type="initiator methionine" description="Removed" evidence="1">
    <location>
        <position position="1"/>
    </location>
</feature>
<feature type="chain" id="PRO_0000132381" description="Small ribosomal subunit protein uS4">
    <location>
        <begin position="2"/>
        <end position="206"/>
    </location>
</feature>
<feature type="domain" description="S4 RNA-binding">
    <location>
        <begin position="96"/>
        <end position="156"/>
    </location>
</feature>
<evidence type="ECO:0000250" key="1"/>
<evidence type="ECO:0000305" key="2"/>
<proteinExistence type="inferred from homology"/>
<sequence>MARYLGPKLKLSRREGTDLFLKSGVRAIDTKCKIEQAPGQHGARKPRLSDYGVQLREKQKVRRIYGVLERQFRNYYKEAARLKGNTGENLLALLEGRLDNVVYRMGFGATRAEARQLVSHKAIMVNGRVVNIASYQVSPNDVVSIREKAKKQSRVKAALELAEQREKPTWLEVDAGKMEGTFKRKPERSDLSADINEHLIVELYSK</sequence>
<protein>
    <recommendedName>
        <fullName evidence="2">Small ribosomal subunit protein uS4</fullName>
    </recommendedName>
    <alternativeName>
        <fullName>30S ribosomal protein S4</fullName>
    </alternativeName>
</protein>
<keyword id="KW-1185">Reference proteome</keyword>
<keyword id="KW-0678">Repressor</keyword>
<keyword id="KW-0687">Ribonucleoprotein</keyword>
<keyword id="KW-0689">Ribosomal protein</keyword>
<keyword id="KW-0694">RNA-binding</keyword>
<keyword id="KW-0699">rRNA-binding</keyword>
<keyword id="KW-0804">Transcription</keyword>
<keyword id="KW-0805">Transcription regulation</keyword>
<keyword id="KW-0806">Transcription termination</keyword>
<keyword id="KW-0810">Translation regulation</keyword>
<dbReference type="EMBL" id="AE014075">
    <property type="protein sequence ID" value="AAN82495.1"/>
    <property type="molecule type" value="Genomic_DNA"/>
</dbReference>
<dbReference type="RefSeq" id="WP_000135224.1">
    <property type="nucleotide sequence ID" value="NZ_CP051263.1"/>
</dbReference>
<dbReference type="SMR" id="P0A7V9"/>
<dbReference type="STRING" id="199310.c4057"/>
<dbReference type="GeneID" id="93778691"/>
<dbReference type="KEGG" id="ecc:c4057"/>
<dbReference type="eggNOG" id="COG0522">
    <property type="taxonomic scope" value="Bacteria"/>
</dbReference>
<dbReference type="HOGENOM" id="CLU_092403_0_2_6"/>
<dbReference type="BioCyc" id="ECOL199310:C4057-MONOMER"/>
<dbReference type="Proteomes" id="UP000001410">
    <property type="component" value="Chromosome"/>
</dbReference>
<dbReference type="GO" id="GO:0015935">
    <property type="term" value="C:small ribosomal subunit"/>
    <property type="evidence" value="ECO:0007669"/>
    <property type="project" value="InterPro"/>
</dbReference>
<dbReference type="GO" id="GO:0019843">
    <property type="term" value="F:rRNA binding"/>
    <property type="evidence" value="ECO:0007669"/>
    <property type="project" value="UniProtKB-UniRule"/>
</dbReference>
<dbReference type="GO" id="GO:0003735">
    <property type="term" value="F:structural constituent of ribosome"/>
    <property type="evidence" value="ECO:0007669"/>
    <property type="project" value="InterPro"/>
</dbReference>
<dbReference type="GO" id="GO:0006353">
    <property type="term" value="P:DNA-templated transcription termination"/>
    <property type="evidence" value="ECO:0007669"/>
    <property type="project" value="UniProtKB-KW"/>
</dbReference>
<dbReference type="GO" id="GO:0006417">
    <property type="term" value="P:regulation of translation"/>
    <property type="evidence" value="ECO:0007669"/>
    <property type="project" value="UniProtKB-KW"/>
</dbReference>
<dbReference type="GO" id="GO:0042274">
    <property type="term" value="P:ribosomal small subunit biogenesis"/>
    <property type="evidence" value="ECO:0007669"/>
    <property type="project" value="TreeGrafter"/>
</dbReference>
<dbReference type="GO" id="GO:0006412">
    <property type="term" value="P:translation"/>
    <property type="evidence" value="ECO:0007669"/>
    <property type="project" value="UniProtKB-UniRule"/>
</dbReference>
<dbReference type="CDD" id="cd00165">
    <property type="entry name" value="S4"/>
    <property type="match status" value="1"/>
</dbReference>
<dbReference type="FunFam" id="1.10.1050.10:FF:000001">
    <property type="entry name" value="30S ribosomal protein S4"/>
    <property type="match status" value="1"/>
</dbReference>
<dbReference type="FunFam" id="3.10.290.10:FF:000001">
    <property type="entry name" value="30S ribosomal protein S4"/>
    <property type="match status" value="1"/>
</dbReference>
<dbReference type="Gene3D" id="1.10.1050.10">
    <property type="entry name" value="Ribosomal Protein S4 Delta 41, Chain A, domain 1"/>
    <property type="match status" value="1"/>
</dbReference>
<dbReference type="Gene3D" id="3.10.290.10">
    <property type="entry name" value="RNA-binding S4 domain"/>
    <property type="match status" value="1"/>
</dbReference>
<dbReference type="HAMAP" id="MF_01306_B">
    <property type="entry name" value="Ribosomal_uS4_B"/>
    <property type="match status" value="1"/>
</dbReference>
<dbReference type="InterPro" id="IPR022801">
    <property type="entry name" value="Ribosomal_uS4"/>
</dbReference>
<dbReference type="InterPro" id="IPR005709">
    <property type="entry name" value="Ribosomal_uS4_bac-type"/>
</dbReference>
<dbReference type="InterPro" id="IPR018079">
    <property type="entry name" value="Ribosomal_uS4_CS"/>
</dbReference>
<dbReference type="InterPro" id="IPR001912">
    <property type="entry name" value="Ribosomal_uS4_N"/>
</dbReference>
<dbReference type="InterPro" id="IPR002942">
    <property type="entry name" value="S4_RNA-bd"/>
</dbReference>
<dbReference type="InterPro" id="IPR036986">
    <property type="entry name" value="S4_RNA-bd_sf"/>
</dbReference>
<dbReference type="NCBIfam" id="NF003717">
    <property type="entry name" value="PRK05327.1"/>
    <property type="match status" value="1"/>
</dbReference>
<dbReference type="NCBIfam" id="TIGR01017">
    <property type="entry name" value="rpsD_bact"/>
    <property type="match status" value="1"/>
</dbReference>
<dbReference type="PANTHER" id="PTHR11831">
    <property type="entry name" value="30S 40S RIBOSOMAL PROTEIN"/>
    <property type="match status" value="1"/>
</dbReference>
<dbReference type="PANTHER" id="PTHR11831:SF4">
    <property type="entry name" value="SMALL RIBOSOMAL SUBUNIT PROTEIN US4M"/>
    <property type="match status" value="1"/>
</dbReference>
<dbReference type="Pfam" id="PF00163">
    <property type="entry name" value="Ribosomal_S4"/>
    <property type="match status" value="1"/>
</dbReference>
<dbReference type="Pfam" id="PF01479">
    <property type="entry name" value="S4"/>
    <property type="match status" value="1"/>
</dbReference>
<dbReference type="SMART" id="SM01390">
    <property type="entry name" value="Ribosomal_S4"/>
    <property type="match status" value="1"/>
</dbReference>
<dbReference type="SMART" id="SM00363">
    <property type="entry name" value="S4"/>
    <property type="match status" value="1"/>
</dbReference>
<dbReference type="SUPFAM" id="SSF55174">
    <property type="entry name" value="Alpha-L RNA-binding motif"/>
    <property type="match status" value="1"/>
</dbReference>
<dbReference type="PROSITE" id="PS00632">
    <property type="entry name" value="RIBOSOMAL_S4"/>
    <property type="match status" value="1"/>
</dbReference>
<dbReference type="PROSITE" id="PS50889">
    <property type="entry name" value="S4"/>
    <property type="match status" value="1"/>
</dbReference>
<accession>P0A7V9</accession>
<accession>P02354</accession>